<reference key="1">
    <citation type="journal article" date="1999" name="Nature">
        <title>Genomic sequence comparison of two unrelated isolates of the human gastric pathogen Helicobacter pylori.</title>
        <authorList>
            <person name="Alm R.A."/>
            <person name="Ling L.-S.L."/>
            <person name="Moir D.T."/>
            <person name="King B.L."/>
            <person name="Brown E.D."/>
            <person name="Doig P.C."/>
            <person name="Smith D.R."/>
            <person name="Noonan B."/>
            <person name="Guild B.C."/>
            <person name="deJonge B.L."/>
            <person name="Carmel G."/>
            <person name="Tummino P.J."/>
            <person name="Caruso A."/>
            <person name="Uria-Nickelsen M."/>
            <person name="Mills D.M."/>
            <person name="Ives C."/>
            <person name="Gibson R."/>
            <person name="Merberg D."/>
            <person name="Mills S.D."/>
            <person name="Jiang Q."/>
            <person name="Taylor D.E."/>
            <person name="Vovis G.F."/>
            <person name="Trust T.J."/>
        </authorList>
    </citation>
    <scope>NUCLEOTIDE SEQUENCE [LARGE SCALE GENOMIC DNA]</scope>
    <source>
        <strain>J99 / ATCC 700824</strain>
    </source>
</reference>
<comment type="function">
    <text evidence="1">Condenses 4-methyl-5-(beta-hydroxyethyl)thiazole monophosphate (THZ-P) and 2-methyl-4-amino-5-hydroxymethyl pyrimidine pyrophosphate (HMP-PP) to form thiamine monophosphate (TMP).</text>
</comment>
<comment type="catalytic activity">
    <reaction evidence="1">
        <text>2-[(2R,5Z)-2-carboxy-4-methylthiazol-5(2H)-ylidene]ethyl phosphate + 4-amino-2-methyl-5-(diphosphooxymethyl)pyrimidine + 2 H(+) = thiamine phosphate + CO2 + diphosphate</text>
        <dbReference type="Rhea" id="RHEA:47844"/>
        <dbReference type="ChEBI" id="CHEBI:15378"/>
        <dbReference type="ChEBI" id="CHEBI:16526"/>
        <dbReference type="ChEBI" id="CHEBI:33019"/>
        <dbReference type="ChEBI" id="CHEBI:37575"/>
        <dbReference type="ChEBI" id="CHEBI:57841"/>
        <dbReference type="ChEBI" id="CHEBI:62899"/>
        <dbReference type="EC" id="2.5.1.3"/>
    </reaction>
</comment>
<comment type="catalytic activity">
    <reaction evidence="1">
        <text>2-(2-carboxy-4-methylthiazol-5-yl)ethyl phosphate + 4-amino-2-methyl-5-(diphosphooxymethyl)pyrimidine + 2 H(+) = thiamine phosphate + CO2 + diphosphate</text>
        <dbReference type="Rhea" id="RHEA:47848"/>
        <dbReference type="ChEBI" id="CHEBI:15378"/>
        <dbReference type="ChEBI" id="CHEBI:16526"/>
        <dbReference type="ChEBI" id="CHEBI:33019"/>
        <dbReference type="ChEBI" id="CHEBI:37575"/>
        <dbReference type="ChEBI" id="CHEBI:57841"/>
        <dbReference type="ChEBI" id="CHEBI:62890"/>
        <dbReference type="EC" id="2.5.1.3"/>
    </reaction>
</comment>
<comment type="catalytic activity">
    <reaction evidence="1">
        <text>4-methyl-5-(2-phosphooxyethyl)-thiazole + 4-amino-2-methyl-5-(diphosphooxymethyl)pyrimidine + H(+) = thiamine phosphate + diphosphate</text>
        <dbReference type="Rhea" id="RHEA:22328"/>
        <dbReference type="ChEBI" id="CHEBI:15378"/>
        <dbReference type="ChEBI" id="CHEBI:33019"/>
        <dbReference type="ChEBI" id="CHEBI:37575"/>
        <dbReference type="ChEBI" id="CHEBI:57841"/>
        <dbReference type="ChEBI" id="CHEBI:58296"/>
        <dbReference type="EC" id="2.5.1.3"/>
    </reaction>
</comment>
<comment type="cofactor">
    <cofactor evidence="1">
        <name>Mg(2+)</name>
        <dbReference type="ChEBI" id="CHEBI:18420"/>
    </cofactor>
    <text evidence="1">Binds 1 Mg(2+) ion per subunit.</text>
</comment>
<comment type="pathway">
    <text evidence="1">Cofactor biosynthesis; thiamine diphosphate biosynthesis; thiamine phosphate from 4-amino-2-methyl-5-diphosphomethylpyrimidine and 4-methyl-5-(2-phosphoethyl)-thiazole: step 1/1.</text>
</comment>
<comment type="similarity">
    <text evidence="1">Belongs to the thiamine-phosphate synthase family.</text>
</comment>
<name>THIE_HELPJ</name>
<organism>
    <name type="scientific">Helicobacter pylori (strain J99 / ATCC 700824)</name>
    <name type="common">Campylobacter pylori J99</name>
    <dbReference type="NCBI Taxonomy" id="85963"/>
    <lineage>
        <taxon>Bacteria</taxon>
        <taxon>Pseudomonadati</taxon>
        <taxon>Campylobacterota</taxon>
        <taxon>Epsilonproteobacteria</taxon>
        <taxon>Campylobacterales</taxon>
        <taxon>Helicobacteraceae</taxon>
        <taxon>Helicobacter</taxon>
    </lineage>
</organism>
<feature type="chain" id="PRO_0000157018" description="Thiamine-phosphate synthase">
    <location>
        <begin position="1"/>
        <end position="217"/>
    </location>
</feature>
<feature type="binding site" evidence="1">
    <location>
        <begin position="45"/>
        <end position="49"/>
    </location>
    <ligand>
        <name>4-amino-2-methyl-5-(diphosphooxymethyl)pyrimidine</name>
        <dbReference type="ChEBI" id="CHEBI:57841"/>
    </ligand>
</feature>
<feature type="binding site" evidence="1">
    <location>
        <position position="81"/>
    </location>
    <ligand>
        <name>4-amino-2-methyl-5-(diphosphooxymethyl)pyrimidine</name>
        <dbReference type="ChEBI" id="CHEBI:57841"/>
    </ligand>
</feature>
<feature type="binding site" evidence="1">
    <location>
        <position position="82"/>
    </location>
    <ligand>
        <name>Mg(2+)</name>
        <dbReference type="ChEBI" id="CHEBI:18420"/>
    </ligand>
</feature>
<feature type="binding site" evidence="1">
    <location>
        <position position="101"/>
    </location>
    <ligand>
        <name>Mg(2+)</name>
        <dbReference type="ChEBI" id="CHEBI:18420"/>
    </ligand>
</feature>
<feature type="binding site" evidence="1">
    <location>
        <position position="120"/>
    </location>
    <ligand>
        <name>4-amino-2-methyl-5-(diphosphooxymethyl)pyrimidine</name>
        <dbReference type="ChEBI" id="CHEBI:57841"/>
    </ligand>
</feature>
<feature type="binding site" evidence="1">
    <location>
        <begin position="147"/>
        <end position="149"/>
    </location>
    <ligand>
        <name>2-[(2R,5Z)-2-carboxy-4-methylthiazol-5(2H)-ylidene]ethyl phosphate</name>
        <dbReference type="ChEBI" id="CHEBI:62899"/>
    </ligand>
</feature>
<feature type="binding site" evidence="1">
    <location>
        <position position="150"/>
    </location>
    <ligand>
        <name>4-amino-2-methyl-5-(diphosphooxymethyl)pyrimidine</name>
        <dbReference type="ChEBI" id="CHEBI:57841"/>
    </ligand>
</feature>
<feature type="binding site" evidence="1">
    <location>
        <position position="179"/>
    </location>
    <ligand>
        <name>2-[(2R,5Z)-2-carboxy-4-methylthiazol-5(2H)-ylidene]ethyl phosphate</name>
        <dbReference type="ChEBI" id="CHEBI:62899"/>
    </ligand>
</feature>
<feature type="binding site" evidence="1">
    <location>
        <begin position="197"/>
        <end position="198"/>
    </location>
    <ligand>
        <name>2-[(2R,5Z)-2-carboxy-4-methylthiazol-5(2H)-ylidene]ethyl phosphate</name>
        <dbReference type="ChEBI" id="CHEBI:62899"/>
    </ligand>
</feature>
<accession>Q9ZL01</accession>
<protein>
    <recommendedName>
        <fullName evidence="1">Thiamine-phosphate synthase</fullName>
        <shortName evidence="1">TP synthase</shortName>
        <shortName evidence="1">TPS</shortName>
        <ecNumber evidence="1">2.5.1.3</ecNumber>
    </recommendedName>
    <alternativeName>
        <fullName evidence="1">Thiamine-phosphate pyrophosphorylase</fullName>
        <shortName evidence="1">TMP pyrophosphorylase</shortName>
        <shortName evidence="1">TMP-PPase</shortName>
    </alternativeName>
</protein>
<gene>
    <name evidence="1" type="primary">thiE</name>
    <name type="ordered locus">jhp_0781</name>
</gene>
<keyword id="KW-0460">Magnesium</keyword>
<keyword id="KW-0479">Metal-binding</keyword>
<keyword id="KW-0784">Thiamine biosynthesis</keyword>
<keyword id="KW-0808">Transferase</keyword>
<evidence type="ECO:0000255" key="1">
    <source>
        <dbReference type="HAMAP-Rule" id="MF_00097"/>
    </source>
</evidence>
<sequence>MFDANCLKLMFVAGSQDFYHIKGDRTNALLDTLELALQSKITAFQFRQKGDLALQDPVEIKRLALECQKLCKKYGTPFIINDEVRLALELKADGVHVGQEDMAIEEVVTLCQKRLFIGLSVNTLEQALKARHLDHIAYLGVGPIFPTPSKKDAKEVVGVNLLKKIHDSGVEKPLIAIGGITTDNASKLQKFSGIAVISAITQAKDKALAVEKLLKNA</sequence>
<proteinExistence type="inferred from homology"/>
<dbReference type="EC" id="2.5.1.3" evidence="1"/>
<dbReference type="EMBL" id="AE001439">
    <property type="protein sequence ID" value="AAD06361.1"/>
    <property type="molecule type" value="Genomic_DNA"/>
</dbReference>
<dbReference type="PIR" id="G71889">
    <property type="entry name" value="G71889"/>
</dbReference>
<dbReference type="RefSeq" id="WP_000458964.1">
    <property type="nucleotide sequence ID" value="NC_000921.1"/>
</dbReference>
<dbReference type="SMR" id="Q9ZL01"/>
<dbReference type="KEGG" id="hpj:jhp_0781"/>
<dbReference type="PATRIC" id="fig|85963.30.peg.193"/>
<dbReference type="eggNOG" id="COG0352">
    <property type="taxonomic scope" value="Bacteria"/>
</dbReference>
<dbReference type="UniPathway" id="UPA00060">
    <property type="reaction ID" value="UER00141"/>
</dbReference>
<dbReference type="Proteomes" id="UP000000804">
    <property type="component" value="Chromosome"/>
</dbReference>
<dbReference type="GO" id="GO:0005737">
    <property type="term" value="C:cytoplasm"/>
    <property type="evidence" value="ECO:0007669"/>
    <property type="project" value="TreeGrafter"/>
</dbReference>
<dbReference type="GO" id="GO:0000287">
    <property type="term" value="F:magnesium ion binding"/>
    <property type="evidence" value="ECO:0007669"/>
    <property type="project" value="UniProtKB-UniRule"/>
</dbReference>
<dbReference type="GO" id="GO:0004789">
    <property type="term" value="F:thiamine-phosphate diphosphorylase activity"/>
    <property type="evidence" value="ECO:0007669"/>
    <property type="project" value="UniProtKB-UniRule"/>
</dbReference>
<dbReference type="GO" id="GO:0009228">
    <property type="term" value="P:thiamine biosynthetic process"/>
    <property type="evidence" value="ECO:0007669"/>
    <property type="project" value="UniProtKB-KW"/>
</dbReference>
<dbReference type="GO" id="GO:0009229">
    <property type="term" value="P:thiamine diphosphate biosynthetic process"/>
    <property type="evidence" value="ECO:0007669"/>
    <property type="project" value="UniProtKB-UniRule"/>
</dbReference>
<dbReference type="CDD" id="cd00564">
    <property type="entry name" value="TMP_TenI"/>
    <property type="match status" value="1"/>
</dbReference>
<dbReference type="FunFam" id="3.20.20.70:FF:000096">
    <property type="entry name" value="Thiamine-phosphate synthase"/>
    <property type="match status" value="1"/>
</dbReference>
<dbReference type="Gene3D" id="3.20.20.70">
    <property type="entry name" value="Aldolase class I"/>
    <property type="match status" value="1"/>
</dbReference>
<dbReference type="HAMAP" id="MF_00097">
    <property type="entry name" value="TMP_synthase"/>
    <property type="match status" value="1"/>
</dbReference>
<dbReference type="InterPro" id="IPR013785">
    <property type="entry name" value="Aldolase_TIM"/>
</dbReference>
<dbReference type="InterPro" id="IPR036206">
    <property type="entry name" value="ThiamineP_synth_sf"/>
</dbReference>
<dbReference type="InterPro" id="IPR022998">
    <property type="entry name" value="ThiamineP_synth_TenI"/>
</dbReference>
<dbReference type="InterPro" id="IPR034291">
    <property type="entry name" value="TMP_synthase"/>
</dbReference>
<dbReference type="NCBIfam" id="TIGR00693">
    <property type="entry name" value="thiE"/>
    <property type="match status" value="1"/>
</dbReference>
<dbReference type="PANTHER" id="PTHR20857">
    <property type="entry name" value="THIAMINE-PHOSPHATE PYROPHOSPHORYLASE"/>
    <property type="match status" value="1"/>
</dbReference>
<dbReference type="PANTHER" id="PTHR20857:SF15">
    <property type="entry name" value="THIAMINE-PHOSPHATE SYNTHASE"/>
    <property type="match status" value="1"/>
</dbReference>
<dbReference type="Pfam" id="PF02581">
    <property type="entry name" value="TMP-TENI"/>
    <property type="match status" value="1"/>
</dbReference>
<dbReference type="SUPFAM" id="SSF51391">
    <property type="entry name" value="Thiamin phosphate synthase"/>
    <property type="match status" value="1"/>
</dbReference>